<organism>
    <name type="scientific">Burkholderia orbicola (strain MC0-3)</name>
    <dbReference type="NCBI Taxonomy" id="406425"/>
    <lineage>
        <taxon>Bacteria</taxon>
        <taxon>Pseudomonadati</taxon>
        <taxon>Pseudomonadota</taxon>
        <taxon>Betaproteobacteria</taxon>
        <taxon>Burkholderiales</taxon>
        <taxon>Burkholderiaceae</taxon>
        <taxon>Burkholderia</taxon>
        <taxon>Burkholderia cepacia complex</taxon>
        <taxon>Burkholderia orbicola</taxon>
    </lineage>
</organism>
<name>DARP_BURO0</name>
<feature type="chain" id="PRO_1000198375" description="Dual-action ribosomal maturation protein DarP">
    <location>
        <begin position="1"/>
        <end position="204"/>
    </location>
</feature>
<feature type="region of interest" description="Disordered" evidence="2">
    <location>
        <begin position="1"/>
        <end position="31"/>
    </location>
</feature>
<feature type="region of interest" description="Disordered" evidence="2">
    <location>
        <begin position="182"/>
        <end position="204"/>
    </location>
</feature>
<feature type="compositionally biased region" description="Acidic residues" evidence="2">
    <location>
        <begin position="186"/>
        <end position="204"/>
    </location>
</feature>
<accession>B1JXV4</accession>
<protein>
    <recommendedName>
        <fullName evidence="1">Dual-action ribosomal maturation protein DarP</fullName>
    </recommendedName>
    <alternativeName>
        <fullName evidence="1">Large ribosomal subunit assembly factor DarP</fullName>
    </alternativeName>
</protein>
<keyword id="KW-0963">Cytoplasm</keyword>
<keyword id="KW-0690">Ribosome biogenesis</keyword>
<keyword id="KW-0694">RNA-binding</keyword>
<keyword id="KW-0699">rRNA-binding</keyword>
<dbReference type="EMBL" id="CP000958">
    <property type="protein sequence ID" value="ACA90216.1"/>
    <property type="molecule type" value="Genomic_DNA"/>
</dbReference>
<dbReference type="SMR" id="B1JXV4"/>
<dbReference type="KEGG" id="bcm:Bcenmc03_1039"/>
<dbReference type="HOGENOM" id="CLU_106757_1_0_4"/>
<dbReference type="Proteomes" id="UP000002169">
    <property type="component" value="Chromosome 1"/>
</dbReference>
<dbReference type="GO" id="GO:0005829">
    <property type="term" value="C:cytosol"/>
    <property type="evidence" value="ECO:0007669"/>
    <property type="project" value="TreeGrafter"/>
</dbReference>
<dbReference type="GO" id="GO:0043022">
    <property type="term" value="F:ribosome binding"/>
    <property type="evidence" value="ECO:0007669"/>
    <property type="project" value="UniProtKB-UniRule"/>
</dbReference>
<dbReference type="GO" id="GO:0019843">
    <property type="term" value="F:rRNA binding"/>
    <property type="evidence" value="ECO:0007669"/>
    <property type="project" value="UniProtKB-UniRule"/>
</dbReference>
<dbReference type="GO" id="GO:1902626">
    <property type="term" value="P:assembly of large subunit precursor of preribosome"/>
    <property type="evidence" value="ECO:0007669"/>
    <property type="project" value="UniProtKB-UniRule"/>
</dbReference>
<dbReference type="CDD" id="cd16331">
    <property type="entry name" value="YjgA-like"/>
    <property type="match status" value="1"/>
</dbReference>
<dbReference type="Gene3D" id="1.10.60.30">
    <property type="entry name" value="PSPTO4464-like domains"/>
    <property type="match status" value="2"/>
</dbReference>
<dbReference type="HAMAP" id="MF_00765">
    <property type="entry name" value="DarP"/>
    <property type="match status" value="1"/>
</dbReference>
<dbReference type="InterPro" id="IPR006839">
    <property type="entry name" value="DarP"/>
</dbReference>
<dbReference type="InterPro" id="IPR023153">
    <property type="entry name" value="DarP_sf"/>
</dbReference>
<dbReference type="NCBIfam" id="NF003593">
    <property type="entry name" value="PRK05255.1-1"/>
    <property type="match status" value="1"/>
</dbReference>
<dbReference type="PANTHER" id="PTHR38101">
    <property type="entry name" value="UPF0307 PROTEIN YJGA"/>
    <property type="match status" value="1"/>
</dbReference>
<dbReference type="PANTHER" id="PTHR38101:SF1">
    <property type="entry name" value="UPF0307 PROTEIN YJGA"/>
    <property type="match status" value="1"/>
</dbReference>
<dbReference type="Pfam" id="PF04751">
    <property type="entry name" value="DarP"/>
    <property type="match status" value="1"/>
</dbReference>
<dbReference type="PIRSF" id="PIRSF016183">
    <property type="entry name" value="UCP016183"/>
    <property type="match status" value="1"/>
</dbReference>
<dbReference type="SUPFAM" id="SSF158710">
    <property type="entry name" value="PSPTO4464-like"/>
    <property type="match status" value="1"/>
</dbReference>
<comment type="function">
    <text evidence="1">Member of a network of 50S ribosomal subunit biogenesis factors which assembles along the 30S-50S interface, preventing incorrect 23S rRNA structures from forming. Promotes peptidyl transferase center (PTC) maturation.</text>
</comment>
<comment type="subcellular location">
    <subcellularLocation>
        <location evidence="1">Cytoplasm</location>
    </subcellularLocation>
    <text evidence="1">Associates with late stage pre-50S ribosomal subunits.</text>
</comment>
<comment type="similarity">
    <text evidence="1">Belongs to the DarP family.</text>
</comment>
<proteinExistence type="inferred from homology"/>
<gene>
    <name evidence="1" type="primary">darP</name>
    <name type="ordered locus">Bcenmc03_1039</name>
</gene>
<sequence length="204" mass="23179">MPPMTRKTRIQPIEPVAEEDDNGYDRPSKSQLKREMHELQVLGQALVDLPKDALKRMPMPESLGDAVREARRITDHEGKRRQLQYVGRVMRSLTDDETAALRTALDAQRGVNKAATARLHWIERTREQLLASDDALTEFLRQHPDADIQEGRTLIRNARKEAQQGKPPRYFRELFQWIKAAGGASDSDDEAADDAGDDHDDDEA</sequence>
<evidence type="ECO:0000255" key="1">
    <source>
        <dbReference type="HAMAP-Rule" id="MF_00765"/>
    </source>
</evidence>
<evidence type="ECO:0000256" key="2">
    <source>
        <dbReference type="SAM" id="MobiDB-lite"/>
    </source>
</evidence>
<reference key="1">
    <citation type="submission" date="2008-02" db="EMBL/GenBank/DDBJ databases">
        <title>Complete sequence of chromosome 1 of Burkholderia cenocepacia MC0-3.</title>
        <authorList>
            <person name="Copeland A."/>
            <person name="Lucas S."/>
            <person name="Lapidus A."/>
            <person name="Barry K."/>
            <person name="Bruce D."/>
            <person name="Goodwin L."/>
            <person name="Glavina del Rio T."/>
            <person name="Dalin E."/>
            <person name="Tice H."/>
            <person name="Pitluck S."/>
            <person name="Chain P."/>
            <person name="Malfatti S."/>
            <person name="Shin M."/>
            <person name="Vergez L."/>
            <person name="Schmutz J."/>
            <person name="Larimer F."/>
            <person name="Land M."/>
            <person name="Hauser L."/>
            <person name="Kyrpides N."/>
            <person name="Mikhailova N."/>
            <person name="Tiedje J."/>
            <person name="Richardson P."/>
        </authorList>
    </citation>
    <scope>NUCLEOTIDE SEQUENCE [LARGE SCALE GENOMIC DNA]</scope>
    <source>
        <strain>MC0-3</strain>
    </source>
</reference>